<comment type="function">
    <text evidence="1">Binds together with bS18 to 16S ribosomal RNA.</text>
</comment>
<comment type="similarity">
    <text evidence="1">Belongs to the bacterial ribosomal protein bS6 family.</text>
</comment>
<proteinExistence type="inferred from homology"/>
<sequence length="101" mass="11360">MRKFETLLLLSPELAADAREALLTTLSGVVEREQGSMITADHWGMRDLAYPVRKQMRGYYVRLEYTAPGATVAELERIIRISDGIFKFVTVKLADAVEEVA</sequence>
<gene>
    <name evidence="1" type="primary">rpsF</name>
    <name type="ordered locus">DVU_0956</name>
</gene>
<name>RS6_NITV2</name>
<accession>Q72DH3</accession>
<protein>
    <recommendedName>
        <fullName evidence="1">Small ribosomal subunit protein bS6</fullName>
    </recommendedName>
    <alternativeName>
        <fullName evidence="2">30S ribosomal protein S6</fullName>
    </alternativeName>
</protein>
<organism>
    <name type="scientific">Nitratidesulfovibrio vulgaris (strain ATCC 29579 / DSM 644 / CCUG 34227 / NCIMB 8303 / VKM B-1760 / Hildenborough)</name>
    <name type="common">Desulfovibrio vulgaris</name>
    <dbReference type="NCBI Taxonomy" id="882"/>
    <lineage>
        <taxon>Bacteria</taxon>
        <taxon>Pseudomonadati</taxon>
        <taxon>Thermodesulfobacteriota</taxon>
        <taxon>Desulfovibrionia</taxon>
        <taxon>Desulfovibrionales</taxon>
        <taxon>Desulfovibrionaceae</taxon>
        <taxon>Nitratidesulfovibrio</taxon>
    </lineage>
</organism>
<evidence type="ECO:0000255" key="1">
    <source>
        <dbReference type="HAMAP-Rule" id="MF_00360"/>
    </source>
</evidence>
<evidence type="ECO:0000305" key="2"/>
<keyword id="KW-1185">Reference proteome</keyword>
<keyword id="KW-0687">Ribonucleoprotein</keyword>
<keyword id="KW-0689">Ribosomal protein</keyword>
<keyword id="KW-0694">RNA-binding</keyword>
<keyword id="KW-0699">rRNA-binding</keyword>
<dbReference type="EMBL" id="AE017285">
    <property type="protein sequence ID" value="AAS95436.1"/>
    <property type="molecule type" value="Genomic_DNA"/>
</dbReference>
<dbReference type="RefSeq" id="WP_010938255.1">
    <property type="nucleotide sequence ID" value="NC_002937.3"/>
</dbReference>
<dbReference type="RefSeq" id="YP_010177.1">
    <property type="nucleotide sequence ID" value="NC_002937.3"/>
</dbReference>
<dbReference type="SMR" id="Q72DH3"/>
<dbReference type="STRING" id="882.DVU_0956"/>
<dbReference type="PaxDb" id="882-DVU_0956"/>
<dbReference type="EnsemblBacteria" id="AAS95436">
    <property type="protein sequence ID" value="AAS95436"/>
    <property type="gene ID" value="DVU_0956"/>
</dbReference>
<dbReference type="KEGG" id="dvu:DVU_0956"/>
<dbReference type="PATRIC" id="fig|882.5.peg.900"/>
<dbReference type="eggNOG" id="COG0360">
    <property type="taxonomic scope" value="Bacteria"/>
</dbReference>
<dbReference type="HOGENOM" id="CLU_113441_5_1_7"/>
<dbReference type="OrthoDB" id="9812702at2"/>
<dbReference type="PhylomeDB" id="Q72DH3"/>
<dbReference type="Proteomes" id="UP000002194">
    <property type="component" value="Chromosome"/>
</dbReference>
<dbReference type="GO" id="GO:0005737">
    <property type="term" value="C:cytoplasm"/>
    <property type="evidence" value="ECO:0007669"/>
    <property type="project" value="UniProtKB-ARBA"/>
</dbReference>
<dbReference type="GO" id="GO:1990904">
    <property type="term" value="C:ribonucleoprotein complex"/>
    <property type="evidence" value="ECO:0007669"/>
    <property type="project" value="UniProtKB-KW"/>
</dbReference>
<dbReference type="GO" id="GO:0005840">
    <property type="term" value="C:ribosome"/>
    <property type="evidence" value="ECO:0007669"/>
    <property type="project" value="UniProtKB-KW"/>
</dbReference>
<dbReference type="GO" id="GO:0070181">
    <property type="term" value="F:small ribosomal subunit rRNA binding"/>
    <property type="evidence" value="ECO:0007669"/>
    <property type="project" value="TreeGrafter"/>
</dbReference>
<dbReference type="GO" id="GO:0003735">
    <property type="term" value="F:structural constituent of ribosome"/>
    <property type="evidence" value="ECO:0007669"/>
    <property type="project" value="InterPro"/>
</dbReference>
<dbReference type="GO" id="GO:0006412">
    <property type="term" value="P:translation"/>
    <property type="evidence" value="ECO:0007669"/>
    <property type="project" value="UniProtKB-UniRule"/>
</dbReference>
<dbReference type="CDD" id="cd00473">
    <property type="entry name" value="bS6"/>
    <property type="match status" value="1"/>
</dbReference>
<dbReference type="Gene3D" id="3.30.70.60">
    <property type="match status" value="1"/>
</dbReference>
<dbReference type="HAMAP" id="MF_00360">
    <property type="entry name" value="Ribosomal_bS6"/>
    <property type="match status" value="1"/>
</dbReference>
<dbReference type="InterPro" id="IPR000529">
    <property type="entry name" value="Ribosomal_bS6"/>
</dbReference>
<dbReference type="InterPro" id="IPR035980">
    <property type="entry name" value="Ribosomal_bS6_sf"/>
</dbReference>
<dbReference type="InterPro" id="IPR020814">
    <property type="entry name" value="Ribosomal_S6_plastid/chlpt"/>
</dbReference>
<dbReference type="InterPro" id="IPR014717">
    <property type="entry name" value="Transl_elong_EF1B/ribsomal_bS6"/>
</dbReference>
<dbReference type="NCBIfam" id="TIGR00166">
    <property type="entry name" value="S6"/>
    <property type="match status" value="1"/>
</dbReference>
<dbReference type="PANTHER" id="PTHR21011">
    <property type="entry name" value="MITOCHONDRIAL 28S RIBOSOMAL PROTEIN S6"/>
    <property type="match status" value="1"/>
</dbReference>
<dbReference type="PANTHER" id="PTHR21011:SF1">
    <property type="entry name" value="SMALL RIBOSOMAL SUBUNIT PROTEIN BS6M"/>
    <property type="match status" value="1"/>
</dbReference>
<dbReference type="Pfam" id="PF01250">
    <property type="entry name" value="Ribosomal_S6"/>
    <property type="match status" value="1"/>
</dbReference>
<dbReference type="SUPFAM" id="SSF54995">
    <property type="entry name" value="Ribosomal protein S6"/>
    <property type="match status" value="1"/>
</dbReference>
<reference key="1">
    <citation type="journal article" date="2004" name="Nat. Biotechnol.">
        <title>The genome sequence of the anaerobic, sulfate-reducing bacterium Desulfovibrio vulgaris Hildenborough.</title>
        <authorList>
            <person name="Heidelberg J.F."/>
            <person name="Seshadri R."/>
            <person name="Haveman S.A."/>
            <person name="Hemme C.L."/>
            <person name="Paulsen I.T."/>
            <person name="Kolonay J.F."/>
            <person name="Eisen J.A."/>
            <person name="Ward N.L."/>
            <person name="Methe B.A."/>
            <person name="Brinkac L.M."/>
            <person name="Daugherty S.C."/>
            <person name="DeBoy R.T."/>
            <person name="Dodson R.J."/>
            <person name="Durkin A.S."/>
            <person name="Madupu R."/>
            <person name="Nelson W.C."/>
            <person name="Sullivan S.A."/>
            <person name="Fouts D.E."/>
            <person name="Haft D.H."/>
            <person name="Selengut J."/>
            <person name="Peterson J.D."/>
            <person name="Davidsen T.M."/>
            <person name="Zafar N."/>
            <person name="Zhou L."/>
            <person name="Radune D."/>
            <person name="Dimitrov G."/>
            <person name="Hance M."/>
            <person name="Tran K."/>
            <person name="Khouri H.M."/>
            <person name="Gill J."/>
            <person name="Utterback T.R."/>
            <person name="Feldblyum T.V."/>
            <person name="Wall J.D."/>
            <person name="Voordouw G."/>
            <person name="Fraser C.M."/>
        </authorList>
    </citation>
    <scope>NUCLEOTIDE SEQUENCE [LARGE SCALE GENOMIC DNA]</scope>
    <source>
        <strain>ATCC 29579 / DSM 644 / CCUG 34227 / NCIMB 8303 / VKM B-1760 / Hildenborough</strain>
    </source>
</reference>
<feature type="chain" id="PRO_0000176763" description="Small ribosomal subunit protein bS6">
    <location>
        <begin position="1"/>
        <end position="101"/>
    </location>
</feature>